<comment type="function">
    <text evidence="1">Inhibits voltage-gated potassium channels.</text>
</comment>
<comment type="subcellular location">
    <subcellularLocation>
        <location evidence="3">Secreted</location>
    </subcellularLocation>
</comment>
<comment type="tissue specificity">
    <text evidence="6">Expressed by the venom gland.</text>
</comment>
<comment type="domain">
    <text evidence="2">Has the structural arrangement of an alpha-helix connected to a beta-sheet by disulfide bonds.</text>
</comment>
<comment type="similarity">
    <text evidence="5">Belongs to the short scorpion toxin superfamily. Potassium channel inhibitor family. Alpha-KTx 09 subfamily.</text>
</comment>
<reference evidence="5" key="1">
    <citation type="journal article" date="2024" name="Acta Trop.">
        <title>Proteomic analysis and lethality of the venom of Aegaeobuthus nigrocinctus, a scorpion of medical significance in the Middle East.</title>
        <authorList>
            <person name="Borges A."/>
            <person name="Lomonte B."/>
        </authorList>
    </citation>
    <scope>PROTEIN SEQUENCE</scope>
    <scope>SUBCELLULAR LOCATION</scope>
    <scope>TISSUE SPECIFICITY</scope>
    <source>
        <tissue evidence="3">Venom</tissue>
    </source>
</reference>
<sequence>VGCEECPMHCKGKNAKPTCDNGVCNCNV</sequence>
<dbReference type="SMR" id="C0HMB3"/>
<dbReference type="GO" id="GO:0005576">
    <property type="term" value="C:extracellular region"/>
    <property type="evidence" value="ECO:0007669"/>
    <property type="project" value="UniProtKB-SubCell"/>
</dbReference>
<dbReference type="GO" id="GO:0008200">
    <property type="term" value="F:ion channel inhibitor activity"/>
    <property type="evidence" value="ECO:0007669"/>
    <property type="project" value="InterPro"/>
</dbReference>
<dbReference type="GO" id="GO:0090729">
    <property type="term" value="F:toxin activity"/>
    <property type="evidence" value="ECO:0007669"/>
    <property type="project" value="UniProtKB-KW"/>
</dbReference>
<dbReference type="InterPro" id="IPR036574">
    <property type="entry name" value="Scorpion_toxin-like_sf"/>
</dbReference>
<dbReference type="InterPro" id="IPR008911">
    <property type="entry name" value="Toxin_alpha-KTx_8/9"/>
</dbReference>
<dbReference type="Pfam" id="PF05453">
    <property type="entry name" value="Toxin_6"/>
    <property type="match status" value="1"/>
</dbReference>
<dbReference type="SUPFAM" id="SSF57095">
    <property type="entry name" value="Scorpion toxin-like"/>
    <property type="match status" value="1"/>
</dbReference>
<evidence type="ECO:0000250" key="1">
    <source>
        <dbReference type="UniProtKB" id="P0CC12"/>
    </source>
</evidence>
<evidence type="ECO:0000250" key="2">
    <source>
        <dbReference type="UniProtKB" id="P80669"/>
    </source>
</evidence>
<evidence type="ECO:0000269" key="3">
    <source>
    </source>
</evidence>
<evidence type="ECO:0000303" key="4">
    <source>
    </source>
</evidence>
<evidence type="ECO:0000305" key="5"/>
<evidence type="ECO:0000305" key="6">
    <source>
    </source>
</evidence>
<feature type="peptide" id="PRO_0000461054" description="Potassium channel toxin alpha-KTx 9.3">
    <location>
        <begin position="1"/>
        <end position="28"/>
    </location>
</feature>
<feature type="disulfide bond" evidence="2">
    <location>
        <begin position="3"/>
        <end position="19"/>
    </location>
</feature>
<feature type="disulfide bond" evidence="2">
    <location>
        <begin position="6"/>
        <end position="24"/>
    </location>
</feature>
<feature type="disulfide bond" evidence="2">
    <location>
        <begin position="10"/>
        <end position="26"/>
    </location>
</feature>
<keyword id="KW-0903">Direct protein sequencing</keyword>
<keyword id="KW-1015">Disulfide bond</keyword>
<keyword id="KW-0964">Secreted</keyword>
<keyword id="KW-0800">Toxin</keyword>
<proteinExistence type="evidence at protein level"/>
<name>KAX93_AEGNI</name>
<accession>C0HMB3</accession>
<organism>
    <name type="scientific">Aegaeobuthus nigrocinctus</name>
    <name type="common">Scorpion</name>
    <name type="synonym">Mesobuthus nigrocinctus</name>
    <dbReference type="NCBI Taxonomy" id="2935606"/>
    <lineage>
        <taxon>Eukaryota</taxon>
        <taxon>Metazoa</taxon>
        <taxon>Ecdysozoa</taxon>
        <taxon>Arthropoda</taxon>
        <taxon>Chelicerata</taxon>
        <taxon>Arachnida</taxon>
        <taxon>Scorpiones</taxon>
        <taxon>Buthida</taxon>
        <taxon>Buthoidea</taxon>
        <taxon>Buthidae</taxon>
        <taxon>Aegaeobuthus</taxon>
    </lineage>
</organism>
<protein>
    <recommendedName>
        <fullName evidence="2">Potassium channel toxin alpha-KTx 9.3</fullName>
    </recommendedName>
    <alternativeName>
        <fullName evidence="4">Alpha-KTx9.13</fullName>
    </alternativeName>
</protein>